<dbReference type="EMBL" id="AP009339">
    <property type="protein sequence ID" value="BAF64994.1"/>
    <property type="molecule type" value="Genomic_DNA"/>
</dbReference>
<dbReference type="EMBL" id="AP009339">
    <property type="protein sequence ID" value="BAF65027.1"/>
    <property type="molecule type" value="Genomic_DNA"/>
</dbReference>
<dbReference type="SMR" id="A6H5M8"/>
<dbReference type="GO" id="GO:0009507">
    <property type="term" value="C:chloroplast"/>
    <property type="evidence" value="ECO:0007669"/>
    <property type="project" value="UniProtKB-SubCell"/>
</dbReference>
<dbReference type="GO" id="GO:0015935">
    <property type="term" value="C:small ribosomal subunit"/>
    <property type="evidence" value="ECO:0007669"/>
    <property type="project" value="InterPro"/>
</dbReference>
<dbReference type="GO" id="GO:0019843">
    <property type="term" value="F:rRNA binding"/>
    <property type="evidence" value="ECO:0007669"/>
    <property type="project" value="UniProtKB-UniRule"/>
</dbReference>
<dbReference type="GO" id="GO:0003735">
    <property type="term" value="F:structural constituent of ribosome"/>
    <property type="evidence" value="ECO:0007669"/>
    <property type="project" value="InterPro"/>
</dbReference>
<dbReference type="GO" id="GO:0006412">
    <property type="term" value="P:translation"/>
    <property type="evidence" value="ECO:0007669"/>
    <property type="project" value="UniProtKB-UniRule"/>
</dbReference>
<dbReference type="CDD" id="cd14871">
    <property type="entry name" value="uS7_Chloroplast"/>
    <property type="match status" value="1"/>
</dbReference>
<dbReference type="FunFam" id="1.10.455.10:FF:000001">
    <property type="entry name" value="30S ribosomal protein S7"/>
    <property type="match status" value="1"/>
</dbReference>
<dbReference type="Gene3D" id="1.10.455.10">
    <property type="entry name" value="Ribosomal protein S7 domain"/>
    <property type="match status" value="1"/>
</dbReference>
<dbReference type="HAMAP" id="MF_00480_B">
    <property type="entry name" value="Ribosomal_uS7_B"/>
    <property type="match status" value="1"/>
</dbReference>
<dbReference type="InterPro" id="IPR000235">
    <property type="entry name" value="Ribosomal_uS7"/>
</dbReference>
<dbReference type="InterPro" id="IPR005717">
    <property type="entry name" value="Ribosomal_uS7_bac/org-type"/>
</dbReference>
<dbReference type="InterPro" id="IPR020606">
    <property type="entry name" value="Ribosomal_uS7_CS"/>
</dbReference>
<dbReference type="InterPro" id="IPR023798">
    <property type="entry name" value="Ribosomal_uS7_dom"/>
</dbReference>
<dbReference type="InterPro" id="IPR036823">
    <property type="entry name" value="Ribosomal_uS7_dom_sf"/>
</dbReference>
<dbReference type="NCBIfam" id="TIGR01029">
    <property type="entry name" value="rpsG_bact"/>
    <property type="match status" value="1"/>
</dbReference>
<dbReference type="PANTHER" id="PTHR11205">
    <property type="entry name" value="RIBOSOMAL PROTEIN S7"/>
    <property type="match status" value="1"/>
</dbReference>
<dbReference type="Pfam" id="PF00177">
    <property type="entry name" value="Ribosomal_S7"/>
    <property type="match status" value="1"/>
</dbReference>
<dbReference type="PIRSF" id="PIRSF002122">
    <property type="entry name" value="RPS7p_RPS7a_RPS5e_RPS7o"/>
    <property type="match status" value="1"/>
</dbReference>
<dbReference type="SUPFAM" id="SSF47973">
    <property type="entry name" value="Ribosomal protein S7"/>
    <property type="match status" value="1"/>
</dbReference>
<dbReference type="PROSITE" id="PS00052">
    <property type="entry name" value="RIBOSOMAL_S7"/>
    <property type="match status" value="1"/>
</dbReference>
<protein>
    <recommendedName>
        <fullName evidence="2">Small ribosomal subunit protein uS7cz/uS7cy</fullName>
    </recommendedName>
    <alternativeName>
        <fullName>30S ribosomal protein S7, chloroplastic</fullName>
    </alternativeName>
</protein>
<accession>A6H5M8</accession>
<name>RR7_CYCTA</name>
<feature type="chain" id="PRO_0000344336" description="Small ribosomal subunit protein uS7cz/uS7cy">
    <location>
        <begin position="1"/>
        <end position="156"/>
    </location>
</feature>
<proteinExistence type="inferred from homology"/>
<keyword id="KW-0150">Chloroplast</keyword>
<keyword id="KW-0934">Plastid</keyword>
<keyword id="KW-0687">Ribonucleoprotein</keyword>
<keyword id="KW-0689">Ribosomal protein</keyword>
<keyword id="KW-0694">RNA-binding</keyword>
<keyword id="KW-0699">rRNA-binding</keyword>
<gene>
    <name type="primary">rps7-A</name>
</gene>
<gene>
    <name type="primary">rps7-B</name>
</gene>
<geneLocation type="chloroplast"/>
<sequence length="156" mass="17860">MSRRSTAEKETAKSDPIYRNRLVNMLVNRILRHGKKSLAYRILYRAMKNIQQKTEKNPLSVLRQAIRGVTPNVTVKARRVGGSTYQVPVEIRSTQGKALAIRWLLGASRKRPPGRNMAFKLSYELMDAARGNGNAIRKKEETHRMAEANRAFAHFR</sequence>
<comment type="function">
    <text evidence="1">One of the primary rRNA binding proteins, it binds directly to 16S rRNA where it nucleates assembly of the head domain of the 30S subunit.</text>
</comment>
<comment type="subunit">
    <text evidence="1">Part of the 30S ribosomal subunit.</text>
</comment>
<comment type="subcellular location">
    <subcellularLocation>
        <location>Plastid</location>
        <location>Chloroplast</location>
    </subcellularLocation>
</comment>
<comment type="similarity">
    <text evidence="3">Belongs to the universal ribosomal protein uS7 family.</text>
</comment>
<reference key="1">
    <citation type="journal article" date="2007" name="Mol. Biol. Evol.">
        <title>Chloroplast genome (cpDNA) of Cycas taitungensis and 56 cp protein-coding genes of Gnetum parvifolium: insights into cpDNA evolution and phylogeny of extant seed plants.</title>
        <authorList>
            <person name="Wu C.-S."/>
            <person name="Wang Y.-N."/>
            <person name="Liu S.-M."/>
            <person name="Chaw S.-M."/>
        </authorList>
    </citation>
    <scope>NUCLEOTIDE SEQUENCE [LARGE SCALE GENOMIC DNA]</scope>
</reference>
<evidence type="ECO:0000250" key="1"/>
<evidence type="ECO:0000255" key="2">
    <source>
        <dbReference type="HAMAP-Rule" id="MF_00480"/>
    </source>
</evidence>
<evidence type="ECO:0000305" key="3"/>
<organism>
    <name type="scientific">Cycas taitungensis</name>
    <name type="common">Prince sago</name>
    <name type="synonym">Cycas taiwaniana</name>
    <dbReference type="NCBI Taxonomy" id="54799"/>
    <lineage>
        <taxon>Eukaryota</taxon>
        <taxon>Viridiplantae</taxon>
        <taxon>Streptophyta</taxon>
        <taxon>Embryophyta</taxon>
        <taxon>Tracheophyta</taxon>
        <taxon>Spermatophyta</taxon>
        <taxon>Cycadidae</taxon>
        <taxon>Cycadales</taxon>
        <taxon>Cycadaceae</taxon>
        <taxon>Cycas</taxon>
    </lineage>
</organism>